<evidence type="ECO:0000250" key="1"/>
<evidence type="ECO:0000256" key="2">
    <source>
        <dbReference type="SAM" id="MobiDB-lite"/>
    </source>
</evidence>
<evidence type="ECO:0000269" key="3">
    <source>
    </source>
</evidence>
<evidence type="ECO:0000305" key="4"/>
<evidence type="ECO:0000305" key="5">
    <source>
    </source>
</evidence>
<evidence type="ECO:0007829" key="6">
    <source>
        <dbReference type="PDB" id="1GSO"/>
    </source>
</evidence>
<keyword id="KW-0002">3D-structure</keyword>
<keyword id="KW-0067">ATP-binding</keyword>
<keyword id="KW-0903">Direct protein sequencing</keyword>
<keyword id="KW-0436">Ligase</keyword>
<keyword id="KW-0460">Magnesium</keyword>
<keyword id="KW-0464">Manganese</keyword>
<keyword id="KW-0479">Metal-binding</keyword>
<keyword id="KW-0547">Nucleotide-binding</keyword>
<keyword id="KW-0658">Purine biosynthesis</keyword>
<keyword id="KW-1185">Reference proteome</keyword>
<sequence>MKVLVIGNGGREHALAWKAAQSPLVETVFVAPGNAGTALEPALQNVAIGVTDIPALLDFAQNEKIDLTIVGPEAPLVKGVVDTFRAAGLKIFGPTAGAAQLEGSKAFTKDFLARHKIPTAEYQNFTEVEPALAYLREKGAPIVIKADGLAAGKGVIVAMTLEEAEAAVHDMLAGNAFGDAGHRIVIEEFLDGEEASFIVMVDGEHVLPMATSQDHKRVGDKDTGPNTGGMGAYSPAPVVTDDVHQRTMERIIWPTVKGMAAEGNTYTGFLYAGLMIDKQGNPKVIEFNCRFGDPETQPIMLRMKSDLVELCLAACESKLDEKTSEWDERASLGVVMAAGGYPGDYRTGDVIHGLPLEEVAGGKVFHAGTKLADDEQVVTNGGRVLCVTALGHTVAEAQKRAYALMTDIHWDDCFCRKDIGWRAIEREQN</sequence>
<organism>
    <name type="scientific">Escherichia coli (strain K12)</name>
    <dbReference type="NCBI Taxonomy" id="83333"/>
    <lineage>
        <taxon>Bacteria</taxon>
        <taxon>Pseudomonadati</taxon>
        <taxon>Pseudomonadota</taxon>
        <taxon>Gammaproteobacteria</taxon>
        <taxon>Enterobacterales</taxon>
        <taxon>Enterobacteriaceae</taxon>
        <taxon>Escherichia</taxon>
    </lineage>
</organism>
<protein>
    <recommendedName>
        <fullName>Phosphoribosylamine--glycine ligase</fullName>
        <ecNumber evidence="3">6.3.4.13</ecNumber>
    </recommendedName>
    <alternativeName>
        <fullName>GARS</fullName>
    </alternativeName>
    <alternativeName>
        <fullName>Glycinamide ribonucleotide synthetase</fullName>
    </alternativeName>
    <alternativeName>
        <fullName>Phosphoribosylglycinamide synthetase</fullName>
    </alternativeName>
</protein>
<proteinExistence type="evidence at protein level"/>
<dbReference type="EC" id="6.3.4.13" evidence="3"/>
<dbReference type="EMBL" id="J05126">
    <property type="protein sequence ID" value="AAA24455.1"/>
    <property type="molecule type" value="Genomic_DNA"/>
</dbReference>
<dbReference type="EMBL" id="X51950">
    <property type="protein sequence ID" value="CAA36213.1"/>
    <property type="molecule type" value="Genomic_DNA"/>
</dbReference>
<dbReference type="EMBL" id="U00006">
    <property type="protein sequence ID" value="AAC43103.1"/>
    <property type="molecule type" value="Genomic_DNA"/>
</dbReference>
<dbReference type="EMBL" id="U00096">
    <property type="protein sequence ID" value="AAC76979.1"/>
    <property type="molecule type" value="Genomic_DNA"/>
</dbReference>
<dbReference type="EMBL" id="AP009048">
    <property type="protein sequence ID" value="BAE77314.1"/>
    <property type="molecule type" value="Genomic_DNA"/>
</dbReference>
<dbReference type="PIR" id="A33771">
    <property type="entry name" value="AJECQG"/>
</dbReference>
<dbReference type="RefSeq" id="NP_418433.1">
    <property type="nucleotide sequence ID" value="NC_000913.3"/>
</dbReference>
<dbReference type="RefSeq" id="WP_000866800.1">
    <property type="nucleotide sequence ID" value="NZ_SSZK01000047.1"/>
</dbReference>
<dbReference type="PDB" id="1GSO">
    <property type="method" value="X-ray"/>
    <property type="resolution" value="1.60 A"/>
    <property type="chains" value="A=1-429"/>
</dbReference>
<dbReference type="PDBsum" id="1GSO"/>
<dbReference type="SMR" id="P15640"/>
<dbReference type="BioGRID" id="4262462">
    <property type="interactions" value="54"/>
</dbReference>
<dbReference type="BioGRID" id="852798">
    <property type="interactions" value="3"/>
</dbReference>
<dbReference type="FunCoup" id="P15640">
    <property type="interactions" value="538"/>
</dbReference>
<dbReference type="IntAct" id="P15640">
    <property type="interactions" value="4"/>
</dbReference>
<dbReference type="STRING" id="511145.b4005"/>
<dbReference type="jPOST" id="P15640"/>
<dbReference type="PaxDb" id="511145-b4005"/>
<dbReference type="EnsemblBacteria" id="AAC76979">
    <property type="protein sequence ID" value="AAC76979"/>
    <property type="gene ID" value="b4005"/>
</dbReference>
<dbReference type="GeneID" id="948504"/>
<dbReference type="KEGG" id="ecj:JW3969"/>
<dbReference type="KEGG" id="eco:b4005"/>
<dbReference type="KEGG" id="ecoc:C3026_21630"/>
<dbReference type="PATRIC" id="fig|1411691.4.peg.2705"/>
<dbReference type="EchoBASE" id="EB0785"/>
<dbReference type="eggNOG" id="COG0151">
    <property type="taxonomic scope" value="Bacteria"/>
</dbReference>
<dbReference type="HOGENOM" id="CLU_027420_3_1_6"/>
<dbReference type="InParanoid" id="P15640"/>
<dbReference type="OMA" id="KATVCKY"/>
<dbReference type="OrthoDB" id="9807240at2"/>
<dbReference type="PhylomeDB" id="P15640"/>
<dbReference type="BioCyc" id="EcoCyc:GLYCRIBONUCSYN-MONOMER"/>
<dbReference type="BioCyc" id="MetaCyc:GLYCRIBONUCSYN-MONOMER"/>
<dbReference type="BRENDA" id="6.3.4.13">
    <property type="organism ID" value="2026"/>
</dbReference>
<dbReference type="UniPathway" id="UPA00074">
    <property type="reaction ID" value="UER00125"/>
</dbReference>
<dbReference type="EvolutionaryTrace" id="P15640"/>
<dbReference type="PRO" id="PR:P15640"/>
<dbReference type="Proteomes" id="UP000000625">
    <property type="component" value="Chromosome"/>
</dbReference>
<dbReference type="GO" id="GO:0005524">
    <property type="term" value="F:ATP binding"/>
    <property type="evidence" value="ECO:0000314"/>
    <property type="project" value="EcoliWiki"/>
</dbReference>
<dbReference type="GO" id="GO:0016887">
    <property type="term" value="F:ATP hydrolysis activity"/>
    <property type="evidence" value="ECO:0000314"/>
    <property type="project" value="EcoliWiki"/>
</dbReference>
<dbReference type="GO" id="GO:0046872">
    <property type="term" value="F:metal ion binding"/>
    <property type="evidence" value="ECO:0007669"/>
    <property type="project" value="UniProtKB-KW"/>
</dbReference>
<dbReference type="GO" id="GO:0004637">
    <property type="term" value="F:phosphoribosylamine-glycine ligase activity"/>
    <property type="evidence" value="ECO:0000314"/>
    <property type="project" value="EcoCyc"/>
</dbReference>
<dbReference type="GO" id="GO:0006189">
    <property type="term" value="P:'de novo' IMP biosynthetic process"/>
    <property type="evidence" value="ECO:0007669"/>
    <property type="project" value="UniProtKB-UniRule"/>
</dbReference>
<dbReference type="GO" id="GO:0006974">
    <property type="term" value="P:DNA damage response"/>
    <property type="evidence" value="ECO:0000270"/>
    <property type="project" value="EcoliWiki"/>
</dbReference>
<dbReference type="GO" id="GO:0009113">
    <property type="term" value="P:purine nucleobase biosynthetic process"/>
    <property type="evidence" value="ECO:0007669"/>
    <property type="project" value="InterPro"/>
</dbReference>
<dbReference type="GO" id="GO:0006164">
    <property type="term" value="P:purine nucleotide biosynthetic process"/>
    <property type="evidence" value="ECO:0000303"/>
    <property type="project" value="EcoliWiki"/>
</dbReference>
<dbReference type="FunFam" id="3.30.470.20:FF:000031">
    <property type="entry name" value="Phosphoribosylamine--glycine ligase"/>
    <property type="match status" value="1"/>
</dbReference>
<dbReference type="FunFam" id="3.40.50.20:FF:000006">
    <property type="entry name" value="Phosphoribosylamine--glycine ligase, chloroplastic"/>
    <property type="match status" value="1"/>
</dbReference>
<dbReference type="FunFam" id="3.30.1490.20:FF:000006">
    <property type="entry name" value="phosphoribosylamine--glycine ligase, chloroplastic-like"/>
    <property type="match status" value="1"/>
</dbReference>
<dbReference type="FunFam" id="3.90.600.10:FF:000001">
    <property type="entry name" value="Trifunctional purine biosynthetic protein adenosine-3"/>
    <property type="match status" value="1"/>
</dbReference>
<dbReference type="Gene3D" id="3.40.50.20">
    <property type="match status" value="1"/>
</dbReference>
<dbReference type="Gene3D" id="3.30.1490.20">
    <property type="entry name" value="ATP-grasp fold, A domain"/>
    <property type="match status" value="1"/>
</dbReference>
<dbReference type="Gene3D" id="3.30.470.20">
    <property type="entry name" value="ATP-grasp fold, B domain"/>
    <property type="match status" value="1"/>
</dbReference>
<dbReference type="Gene3D" id="3.90.600.10">
    <property type="entry name" value="Phosphoribosylglycinamide synthetase, C-terminal domain"/>
    <property type="match status" value="1"/>
</dbReference>
<dbReference type="HAMAP" id="MF_00138">
    <property type="entry name" value="GARS"/>
    <property type="match status" value="1"/>
</dbReference>
<dbReference type="InterPro" id="IPR011761">
    <property type="entry name" value="ATP-grasp"/>
</dbReference>
<dbReference type="InterPro" id="IPR013815">
    <property type="entry name" value="ATP_grasp_subdomain_1"/>
</dbReference>
<dbReference type="InterPro" id="IPR016185">
    <property type="entry name" value="PreATP-grasp_dom_sf"/>
</dbReference>
<dbReference type="InterPro" id="IPR020561">
    <property type="entry name" value="PRibGlycinamid_synth_ATP-grasp"/>
</dbReference>
<dbReference type="InterPro" id="IPR000115">
    <property type="entry name" value="PRibGlycinamide_synth"/>
</dbReference>
<dbReference type="InterPro" id="IPR020560">
    <property type="entry name" value="PRibGlycinamide_synth_C-dom"/>
</dbReference>
<dbReference type="InterPro" id="IPR037123">
    <property type="entry name" value="PRibGlycinamide_synth_C_sf"/>
</dbReference>
<dbReference type="InterPro" id="IPR020559">
    <property type="entry name" value="PRibGlycinamide_synth_CS"/>
</dbReference>
<dbReference type="InterPro" id="IPR020562">
    <property type="entry name" value="PRibGlycinamide_synth_N"/>
</dbReference>
<dbReference type="InterPro" id="IPR011054">
    <property type="entry name" value="Rudment_hybrid_motif"/>
</dbReference>
<dbReference type="NCBIfam" id="TIGR00877">
    <property type="entry name" value="purD"/>
    <property type="match status" value="1"/>
</dbReference>
<dbReference type="PANTHER" id="PTHR43472">
    <property type="entry name" value="PHOSPHORIBOSYLAMINE--GLYCINE LIGASE"/>
    <property type="match status" value="1"/>
</dbReference>
<dbReference type="PANTHER" id="PTHR43472:SF1">
    <property type="entry name" value="PHOSPHORIBOSYLAMINE--GLYCINE LIGASE, CHLOROPLASTIC"/>
    <property type="match status" value="1"/>
</dbReference>
<dbReference type="Pfam" id="PF01071">
    <property type="entry name" value="GARS_A"/>
    <property type="match status" value="1"/>
</dbReference>
<dbReference type="Pfam" id="PF02843">
    <property type="entry name" value="GARS_C"/>
    <property type="match status" value="1"/>
</dbReference>
<dbReference type="Pfam" id="PF02844">
    <property type="entry name" value="GARS_N"/>
    <property type="match status" value="1"/>
</dbReference>
<dbReference type="SMART" id="SM01209">
    <property type="entry name" value="GARS_A"/>
    <property type="match status" value="1"/>
</dbReference>
<dbReference type="SMART" id="SM01210">
    <property type="entry name" value="GARS_C"/>
    <property type="match status" value="1"/>
</dbReference>
<dbReference type="SUPFAM" id="SSF56059">
    <property type="entry name" value="Glutathione synthetase ATP-binding domain-like"/>
    <property type="match status" value="1"/>
</dbReference>
<dbReference type="SUPFAM" id="SSF52440">
    <property type="entry name" value="PreATP-grasp domain"/>
    <property type="match status" value="1"/>
</dbReference>
<dbReference type="SUPFAM" id="SSF51246">
    <property type="entry name" value="Rudiment single hybrid motif"/>
    <property type="match status" value="1"/>
</dbReference>
<dbReference type="PROSITE" id="PS50975">
    <property type="entry name" value="ATP_GRASP"/>
    <property type="match status" value="1"/>
</dbReference>
<dbReference type="PROSITE" id="PS00184">
    <property type="entry name" value="GARS"/>
    <property type="match status" value="1"/>
</dbReference>
<feature type="chain" id="PRO_0000151448" description="Phosphoribosylamine--glycine ligase">
    <location>
        <begin position="1"/>
        <end position="429"/>
    </location>
</feature>
<feature type="domain" description="ATP-grasp">
    <location>
        <begin position="109"/>
        <end position="316"/>
    </location>
</feature>
<feature type="region of interest" description="Disordered" evidence="2">
    <location>
        <begin position="212"/>
        <end position="236"/>
    </location>
</feature>
<feature type="compositionally biased region" description="Basic and acidic residues" evidence="2">
    <location>
        <begin position="213"/>
        <end position="223"/>
    </location>
</feature>
<feature type="binding site" evidence="1">
    <location>
        <begin position="135"/>
        <end position="196"/>
    </location>
    <ligand>
        <name>ATP</name>
        <dbReference type="ChEBI" id="CHEBI:30616"/>
    </ligand>
</feature>
<feature type="binding site" evidence="1">
    <location>
        <position position="286"/>
    </location>
    <ligand>
        <name>Mg(2+)</name>
        <dbReference type="ChEBI" id="CHEBI:18420"/>
    </ligand>
</feature>
<feature type="binding site" evidence="1">
    <location>
        <position position="288"/>
    </location>
    <ligand>
        <name>Mg(2+)</name>
        <dbReference type="ChEBI" id="CHEBI:18420"/>
    </ligand>
</feature>
<feature type="sequence conflict" description="In Ref. 1; AAA24455." evidence="4" ref="1">
    <original>LA</original>
    <variation>WR</variation>
    <location>
        <begin position="15"/>
        <end position="16"/>
    </location>
</feature>
<feature type="sequence conflict" description="In Ref. 1; AAA24455." evidence="4" ref="1">
    <original>G</original>
    <variation>V</variation>
    <location>
        <position position="97"/>
    </location>
</feature>
<feature type="strand" evidence="6">
    <location>
        <begin position="1"/>
        <end position="7"/>
    </location>
</feature>
<feature type="helix" evidence="6">
    <location>
        <begin position="10"/>
        <end position="19"/>
    </location>
</feature>
<feature type="strand" evidence="6">
    <location>
        <begin position="25"/>
        <end position="32"/>
    </location>
</feature>
<feature type="helix" evidence="6">
    <location>
        <begin position="35"/>
        <end position="39"/>
    </location>
</feature>
<feature type="strand" evidence="6">
    <location>
        <begin position="43"/>
        <end position="45"/>
    </location>
</feature>
<feature type="helix" evidence="6">
    <location>
        <begin position="53"/>
        <end position="62"/>
    </location>
</feature>
<feature type="strand" evidence="6">
    <location>
        <begin position="66"/>
        <end position="70"/>
    </location>
</feature>
<feature type="helix" evidence="6">
    <location>
        <begin position="73"/>
        <end position="77"/>
    </location>
</feature>
<feature type="helix" evidence="6">
    <location>
        <begin position="80"/>
        <end position="86"/>
    </location>
</feature>
<feature type="strand" evidence="6">
    <location>
        <begin position="91"/>
        <end position="93"/>
    </location>
</feature>
<feature type="turn" evidence="6">
    <location>
        <begin position="96"/>
        <end position="99"/>
    </location>
</feature>
<feature type="helix" evidence="6">
    <location>
        <begin position="100"/>
        <end position="103"/>
    </location>
</feature>
<feature type="helix" evidence="6">
    <location>
        <begin position="105"/>
        <end position="114"/>
    </location>
</feature>
<feature type="strand" evidence="6">
    <location>
        <begin position="122"/>
        <end position="129"/>
    </location>
</feature>
<feature type="helix" evidence="6">
    <location>
        <begin position="130"/>
        <end position="138"/>
    </location>
</feature>
<feature type="strand" evidence="6">
    <location>
        <begin position="140"/>
        <end position="145"/>
    </location>
</feature>
<feature type="strand" evidence="6">
    <location>
        <begin position="155"/>
        <end position="160"/>
    </location>
</feature>
<feature type="helix" evidence="6">
    <location>
        <begin position="161"/>
        <end position="168"/>
    </location>
</feature>
<feature type="turn" evidence="6">
    <location>
        <begin position="169"/>
        <end position="172"/>
    </location>
</feature>
<feature type="strand" evidence="6">
    <location>
        <begin position="184"/>
        <end position="188"/>
    </location>
</feature>
<feature type="strand" evidence="6">
    <location>
        <begin position="192"/>
        <end position="204"/>
    </location>
</feature>
<feature type="strand" evidence="6">
    <location>
        <begin position="206"/>
        <end position="219"/>
    </location>
</feature>
<feature type="turn" evidence="6">
    <location>
        <begin position="220"/>
        <end position="222"/>
    </location>
</feature>
<feature type="strand" evidence="6">
    <location>
        <begin position="223"/>
        <end position="235"/>
    </location>
</feature>
<feature type="helix" evidence="6">
    <location>
        <begin position="241"/>
        <end position="250"/>
    </location>
</feature>
<feature type="helix" evidence="6">
    <location>
        <begin position="252"/>
        <end position="261"/>
    </location>
</feature>
<feature type="strand" evidence="6">
    <location>
        <begin position="267"/>
        <end position="277"/>
    </location>
</feature>
<feature type="strand" evidence="6">
    <location>
        <begin position="282"/>
        <end position="290"/>
    </location>
</feature>
<feature type="turn" evidence="6">
    <location>
        <begin position="293"/>
        <end position="295"/>
    </location>
</feature>
<feature type="helix" evidence="6">
    <location>
        <begin position="296"/>
        <end position="302"/>
    </location>
</feature>
<feature type="helix" evidence="6">
    <location>
        <begin position="307"/>
        <end position="315"/>
    </location>
</feature>
<feature type="helix" evidence="6">
    <location>
        <begin position="319"/>
        <end position="321"/>
    </location>
</feature>
<feature type="strand" evidence="6">
    <location>
        <begin position="328"/>
        <end position="338"/>
    </location>
</feature>
<feature type="turn" evidence="6">
    <location>
        <begin position="339"/>
        <end position="342"/>
    </location>
</feature>
<feature type="strand" evidence="6">
    <location>
        <begin position="362"/>
        <end position="371"/>
    </location>
</feature>
<feature type="strand" evidence="6">
    <location>
        <begin position="377"/>
        <end position="379"/>
    </location>
</feature>
<feature type="strand" evidence="6">
    <location>
        <begin position="381"/>
        <end position="393"/>
    </location>
</feature>
<feature type="helix" evidence="6">
    <location>
        <begin position="394"/>
        <end position="404"/>
    </location>
</feature>
<feature type="turn" evidence="6">
    <location>
        <begin position="405"/>
        <end position="407"/>
    </location>
</feature>
<feature type="helix" evidence="6">
    <location>
        <begin position="421"/>
        <end position="425"/>
    </location>
</feature>
<gene>
    <name type="primary">purD</name>
    <name type="ordered locus">b4005</name>
    <name type="ordered locus">JW3969</name>
</gene>
<accession>P15640</accession>
<accession>Q2M8U2</accession>
<reference key="1">
    <citation type="journal article" date="1989" name="J. Biol. Chem.">
        <title>Nucleotide sequence analysis of genes purH and purD involved in the de novo purine nucleotide biosynthesis of Escherichia coli.</title>
        <authorList>
            <person name="Aiba A."/>
            <person name="Mizobuchi K."/>
        </authorList>
    </citation>
    <scope>NUCLEOTIDE SEQUENCE [GENOMIC DNA]</scope>
</reference>
<reference key="2">
    <citation type="journal article" date="1990" name="Biochemistry">
        <title>Glycinamide ribonucleotide synthetase from Escherichia coli: cloning, overproduction, sequencing, isolation, and characterization.</title>
        <authorList>
            <person name="Shen Y."/>
            <person name="Rudolph J."/>
            <person name="Stern M."/>
            <person name="Flannigan K.A."/>
            <person name="Smith J.M."/>
        </authorList>
    </citation>
    <scope>NUCLEOTIDE SEQUENCE [GENOMIC DNA]</scope>
    <scope>PROTEIN SEQUENCE OF 1-15</scope>
    <scope>FUNCTION</scope>
    <scope>CATALYTIC ACTIVITY</scope>
    <scope>BIOPHYSICOCHEMICAL PROPERTIES</scope>
    <scope>SUBUNIT</scope>
    <scope>COFACTOR</scope>
    <scope>PATHWAY</scope>
    <source>
        <strain>K12</strain>
    </source>
</reference>
<reference key="3">
    <citation type="journal article" date="1993" name="Nucleic Acids Res.">
        <title>Analysis of the Escherichia coli genome. IV. DNA sequence of the region from 89.2 to 92.8 minutes.</title>
        <authorList>
            <person name="Blattner F.R."/>
            <person name="Burland V.D."/>
            <person name="Plunkett G. III"/>
            <person name="Sofia H.J."/>
            <person name="Daniels D.L."/>
        </authorList>
    </citation>
    <scope>NUCLEOTIDE SEQUENCE [LARGE SCALE GENOMIC DNA]</scope>
    <source>
        <strain>K12 / MG1655 / ATCC 47076</strain>
    </source>
</reference>
<reference key="4">
    <citation type="journal article" date="1997" name="Science">
        <title>The complete genome sequence of Escherichia coli K-12.</title>
        <authorList>
            <person name="Blattner F.R."/>
            <person name="Plunkett G. III"/>
            <person name="Bloch C.A."/>
            <person name="Perna N.T."/>
            <person name="Burland V."/>
            <person name="Riley M."/>
            <person name="Collado-Vides J."/>
            <person name="Glasner J.D."/>
            <person name="Rode C.K."/>
            <person name="Mayhew G.F."/>
            <person name="Gregor J."/>
            <person name="Davis N.W."/>
            <person name="Kirkpatrick H.A."/>
            <person name="Goeden M.A."/>
            <person name="Rose D.J."/>
            <person name="Mau B."/>
            <person name="Shao Y."/>
        </authorList>
    </citation>
    <scope>NUCLEOTIDE SEQUENCE [LARGE SCALE GENOMIC DNA]</scope>
    <source>
        <strain>K12 / MG1655 / ATCC 47076</strain>
    </source>
</reference>
<reference key="5">
    <citation type="journal article" date="2006" name="Mol. Syst. Biol.">
        <title>Highly accurate genome sequences of Escherichia coli K-12 strains MG1655 and W3110.</title>
        <authorList>
            <person name="Hayashi K."/>
            <person name="Morooka N."/>
            <person name="Yamamoto Y."/>
            <person name="Fujita K."/>
            <person name="Isono K."/>
            <person name="Choi S."/>
            <person name="Ohtsubo E."/>
            <person name="Baba T."/>
            <person name="Wanner B.L."/>
            <person name="Mori H."/>
            <person name="Horiuchi T."/>
        </authorList>
    </citation>
    <scope>NUCLEOTIDE SEQUENCE [LARGE SCALE GENOMIC DNA]</scope>
    <source>
        <strain>K12 / W3110 / ATCC 27325 / DSM 5911</strain>
    </source>
</reference>
<reference key="6">
    <citation type="journal article" date="1998" name="Biochemistry">
        <title>X-ray crystal structure of glycinamide ribonucleotide synthetase from Escherichia coli.</title>
        <authorList>
            <person name="Wang W."/>
            <person name="Kappock T.J."/>
            <person name="Stubbe J."/>
            <person name="Ealick S.E."/>
        </authorList>
    </citation>
    <scope>X-RAY CRYSTALLOGRAPHY (1.6 ANGSTROMS)</scope>
</reference>
<comment type="function">
    <text evidence="3">Catalyzes the reversible conversion of phosphoribosylamine to glycinamide ribonucleotide, an enzymatic step in purine biosynthesis pathway.</text>
</comment>
<comment type="catalytic activity">
    <reaction evidence="3">
        <text>5-phospho-beta-D-ribosylamine + glycine + ATP = N(1)-(5-phospho-beta-D-ribosyl)glycinamide + ADP + phosphate + H(+)</text>
        <dbReference type="Rhea" id="RHEA:17453"/>
        <dbReference type="ChEBI" id="CHEBI:15378"/>
        <dbReference type="ChEBI" id="CHEBI:30616"/>
        <dbReference type="ChEBI" id="CHEBI:43474"/>
        <dbReference type="ChEBI" id="CHEBI:57305"/>
        <dbReference type="ChEBI" id="CHEBI:58681"/>
        <dbReference type="ChEBI" id="CHEBI:143788"/>
        <dbReference type="ChEBI" id="CHEBI:456216"/>
        <dbReference type="EC" id="6.3.4.13"/>
    </reaction>
    <physiologicalReaction direction="left-to-right" evidence="3">
        <dbReference type="Rhea" id="RHEA:17454"/>
    </physiologicalReaction>
    <physiologicalReaction direction="right-to-left" evidence="3">
        <dbReference type="Rhea" id="RHEA:17455"/>
    </physiologicalReaction>
</comment>
<comment type="cofactor">
    <cofactor evidence="3">
        <name>Mg(2+)</name>
        <dbReference type="ChEBI" id="CHEBI:18420"/>
    </cofactor>
    <cofactor evidence="1">
        <name>Mn(2+)</name>
        <dbReference type="ChEBI" id="CHEBI:29035"/>
    </cofactor>
    <text evidence="1">Binds 1 Mg(2+) or Mn(2+) ion per subunit.</text>
</comment>
<comment type="biophysicochemical properties">
    <kinetics>
        <KM evidence="3">70 uM for 5-phospho-beta-D-ribosylamine</KM>
        <KM evidence="3">270 uM for glycine</KM>
        <KM evidence="3">170 uM for ATP</KM>
        <KM evidence="3">30 uM for N(1)-(5-phospho-beta-D-ribosyl)glycinamide</KM>
        <KM evidence="3">6.4 uM for ADP</KM>
    </kinetics>
</comment>
<comment type="pathway">
    <text evidence="5">Purine metabolism; IMP biosynthesis via de novo pathway; N(1)-(5-phospho-D-ribosyl)glycinamide from 5-phospho-alpha-D-ribose 1-diphosphate: step 2/2.</text>
</comment>
<comment type="subunit">
    <text evidence="3">Monomer.</text>
</comment>
<comment type="similarity">
    <text evidence="4">Belongs to the GARS family.</text>
</comment>
<name>PUR2_ECOLI</name>